<dbReference type="EC" id="3.4.21.107"/>
<dbReference type="EMBL" id="AJ005672">
    <property type="protein sequence ID" value="CAA06668.1"/>
    <property type="molecule type" value="Genomic_DNA"/>
</dbReference>
<dbReference type="SMR" id="Q9Z4H7"/>
<dbReference type="MEROPS" id="S01.447"/>
<dbReference type="eggNOG" id="COG0265">
    <property type="taxonomic scope" value="Bacteria"/>
</dbReference>
<dbReference type="GO" id="GO:0005886">
    <property type="term" value="C:plasma membrane"/>
    <property type="evidence" value="ECO:0007669"/>
    <property type="project" value="UniProtKB-SubCell"/>
</dbReference>
<dbReference type="GO" id="GO:0004252">
    <property type="term" value="F:serine-type endopeptidase activity"/>
    <property type="evidence" value="ECO:0007669"/>
    <property type="project" value="InterPro"/>
</dbReference>
<dbReference type="GO" id="GO:0006508">
    <property type="term" value="P:proteolysis"/>
    <property type="evidence" value="ECO:0007669"/>
    <property type="project" value="UniProtKB-KW"/>
</dbReference>
<dbReference type="CDD" id="cd06781">
    <property type="entry name" value="cpPDZ_BsHtra-like"/>
    <property type="match status" value="1"/>
</dbReference>
<dbReference type="Gene3D" id="2.30.42.10">
    <property type="match status" value="1"/>
</dbReference>
<dbReference type="Gene3D" id="2.40.10.10">
    <property type="entry name" value="Trypsin-like serine proteases"/>
    <property type="match status" value="2"/>
</dbReference>
<dbReference type="InterPro" id="IPR051201">
    <property type="entry name" value="Chloro_Bact_Ser_Proteases"/>
</dbReference>
<dbReference type="InterPro" id="IPR001478">
    <property type="entry name" value="PDZ"/>
</dbReference>
<dbReference type="InterPro" id="IPR036034">
    <property type="entry name" value="PDZ_sf"/>
</dbReference>
<dbReference type="InterPro" id="IPR009003">
    <property type="entry name" value="Peptidase_S1_PA"/>
</dbReference>
<dbReference type="InterPro" id="IPR043504">
    <property type="entry name" value="Peptidase_S1_PA_chymotrypsin"/>
</dbReference>
<dbReference type="InterPro" id="IPR001940">
    <property type="entry name" value="Peptidase_S1C"/>
</dbReference>
<dbReference type="PANTHER" id="PTHR43343">
    <property type="entry name" value="PEPTIDASE S12"/>
    <property type="match status" value="1"/>
</dbReference>
<dbReference type="PANTHER" id="PTHR43343:SF3">
    <property type="entry name" value="PROTEASE DO-LIKE 8, CHLOROPLASTIC"/>
    <property type="match status" value="1"/>
</dbReference>
<dbReference type="Pfam" id="PF13180">
    <property type="entry name" value="PDZ_2"/>
    <property type="match status" value="1"/>
</dbReference>
<dbReference type="Pfam" id="PF13365">
    <property type="entry name" value="Trypsin_2"/>
    <property type="match status" value="1"/>
</dbReference>
<dbReference type="PRINTS" id="PR00834">
    <property type="entry name" value="PROTEASES2C"/>
</dbReference>
<dbReference type="SMART" id="SM00228">
    <property type="entry name" value="PDZ"/>
    <property type="match status" value="1"/>
</dbReference>
<dbReference type="SUPFAM" id="SSF50156">
    <property type="entry name" value="PDZ domain-like"/>
    <property type="match status" value="1"/>
</dbReference>
<dbReference type="SUPFAM" id="SSF50494">
    <property type="entry name" value="Trypsin-like serine proteases"/>
    <property type="match status" value="1"/>
</dbReference>
<dbReference type="PROSITE" id="PS50106">
    <property type="entry name" value="PDZ"/>
    <property type="match status" value="1"/>
</dbReference>
<name>HTRA_LACHE</name>
<organism>
    <name type="scientific">Lactobacillus helveticus</name>
    <name type="common">Lactobacillus suntoryeus</name>
    <dbReference type="NCBI Taxonomy" id="1587"/>
    <lineage>
        <taxon>Bacteria</taxon>
        <taxon>Bacillati</taxon>
        <taxon>Bacillota</taxon>
        <taxon>Bacilli</taxon>
        <taxon>Lactobacillales</taxon>
        <taxon>Lactobacillaceae</taxon>
        <taxon>Lactobacillus</taxon>
    </lineage>
</organism>
<gene>
    <name type="primary">htrA</name>
</gene>
<accession>Q9Z4H7</accession>
<sequence length="413" mass="42647">MVENQNNNQNQPRKKSGNKIIATAAIFGVVGGLVGGGVSYYAMDQMNNGQGNGAAQISISSSSSKVSEKSAKNGGTMTAAYNDVKGAVVSVINLKRQSASSGTDSLYNSLFGDDSDSSSSKNGKLETYSEGSGVVYMKSNGKGYIVTNNHVISGSDAVQVLLANGKTVNAKVVGKDSTTDLAVLSIDAKYVTQTAQFGDSKHLEAGQTVIAVGSPLGSEYASTVTQGIISAPARTISTSSGNQQTVIQTDAAINPGNSGGALVNSAGQVIGINSMKLAQSSDGTSVEGMAFAIPSNEVVTIVNELVKKGKITRPQLGVRVIALQGIPEGYRSRLKIKSNLKNGIYIAFVSRNGSAANAGIKSGDVITKVDGKKVEDVASLHSILYSHKVGDTVNVTVNRNGKDVDMKVKLEGN</sequence>
<evidence type="ECO:0000250" key="1"/>
<evidence type="ECO:0000255" key="2"/>
<evidence type="ECO:0000255" key="3">
    <source>
        <dbReference type="PROSITE-ProRule" id="PRU00143"/>
    </source>
</evidence>
<evidence type="ECO:0000305" key="4"/>
<reference key="1">
    <citation type="journal article" date="1998" name="J. Bacteriol.">
        <title>Molecular characterization of a stress-inducible gene from Lactobacillus helveticus.</title>
        <authorList>
            <person name="Smeds A."/>
            <person name="Varmanen P.K."/>
            <person name="Palva A.M."/>
        </authorList>
    </citation>
    <scope>NUCLEOTIDE SEQUENCE [GENOMIC DNA]</scope>
    <source>
        <strain>53/7</strain>
    </source>
</reference>
<keyword id="KW-1003">Cell membrane</keyword>
<keyword id="KW-0378">Hydrolase</keyword>
<keyword id="KW-0472">Membrane</keyword>
<keyword id="KW-0645">Protease</keyword>
<keyword id="KW-0720">Serine protease</keyword>
<keyword id="KW-0812">Transmembrane</keyword>
<keyword id="KW-1133">Transmembrane helix</keyword>
<protein>
    <recommendedName>
        <fullName>Serine protease Do-like HtrA</fullName>
        <ecNumber>3.4.21.107</ecNumber>
    </recommendedName>
</protein>
<feature type="chain" id="PRO_0000093860" description="Serine protease Do-like HtrA">
    <location>
        <begin position="1"/>
        <end position="413"/>
    </location>
</feature>
<feature type="transmembrane region" description="Helical" evidence="2">
    <location>
        <begin position="20"/>
        <end position="40"/>
    </location>
</feature>
<feature type="domain" description="PDZ" evidence="3">
    <location>
        <begin position="305"/>
        <end position="401"/>
    </location>
</feature>
<feature type="active site" description="Charge relay system" evidence="2">
    <location>
        <position position="150"/>
    </location>
</feature>
<feature type="active site" description="Charge relay system" evidence="2">
    <location>
        <position position="180"/>
    </location>
</feature>
<feature type="active site" description="Charge relay system" evidence="2">
    <location>
        <position position="258"/>
    </location>
</feature>
<feature type="binding site" evidence="1">
    <location>
        <begin position="256"/>
        <end position="258"/>
    </location>
    <ligand>
        <name>substrate</name>
    </ligand>
</feature>
<feature type="binding site" evidence="1">
    <location>
        <begin position="316"/>
        <end position="320"/>
    </location>
    <ligand>
        <name>substrate</name>
    </ligand>
</feature>
<comment type="function">
    <text evidence="1">Degrades abnormal exported proteins and responsible for the propeptide processing of a natural pro-protein and for the maturation of a native protein. It also plays a prominent role in stress (heat shock, ethanol, puromycin and NaCl) resistance during active exponential growth (By similarity).</text>
</comment>
<comment type="catalytic activity">
    <reaction>
        <text>Acts on substrates that are at least partially unfolded. The cleavage site P1 residue is normally between a pair of hydrophobic residues, such as Val-|-Val.</text>
        <dbReference type="EC" id="3.4.21.107"/>
    </reaction>
</comment>
<comment type="subcellular location">
    <subcellularLocation>
        <location evidence="4">Cell membrane</location>
        <topology evidence="4">Single-pass membrane protein</topology>
    </subcellularLocation>
</comment>
<comment type="similarity">
    <text evidence="4">Belongs to the peptidase S1C family.</text>
</comment>
<proteinExistence type="inferred from homology"/>